<protein>
    <recommendedName>
        <fullName>Nodal homolog 3-C</fullName>
    </recommendedName>
    <alternativeName>
        <fullName>Nodal-related protein 3-C</fullName>
    </alternativeName>
    <alternativeName>
        <fullName>Xtnr3-C</fullName>
    </alternativeName>
</protein>
<feature type="signal peptide" evidence="5">
    <location>
        <begin position="1"/>
        <end position="18"/>
    </location>
</feature>
<feature type="propeptide" id="PRO_0000338458" evidence="5">
    <location>
        <begin position="19"/>
        <end position="274"/>
    </location>
</feature>
<feature type="chain" id="PRO_0000338459" description="Nodal homolog 3-C" evidence="5">
    <location>
        <begin position="275"/>
        <end position="401"/>
    </location>
</feature>
<feature type="glycosylation site" description="N-linked (GlcNAc...) asparagine" evidence="5">
    <location>
        <position position="168"/>
    </location>
</feature>
<feature type="glycosylation site" description="N-linked (GlcNAc...) asparagine" evidence="5">
    <location>
        <position position="337"/>
    </location>
</feature>
<feature type="glycosylation site" description="N-linked (GlcNAc...) asparagine" evidence="5">
    <location>
        <position position="344"/>
    </location>
</feature>
<feature type="disulfide bond" evidence="2">
    <location>
        <begin position="299"/>
        <end position="365"/>
    </location>
</feature>
<feature type="disulfide bond" evidence="2">
    <location>
        <begin position="328"/>
        <end position="396"/>
    </location>
</feature>
<dbReference type="EMBL" id="AB093329">
    <property type="protein sequence ID" value="BAC75532.1"/>
    <property type="molecule type" value="mRNA"/>
</dbReference>
<dbReference type="RefSeq" id="NP_001106377.1">
    <property type="nucleotide sequence ID" value="NM_001112906.1"/>
</dbReference>
<dbReference type="STRING" id="8364.ENSXETP00000052018"/>
<dbReference type="GlyCosmos" id="Q800B8">
    <property type="glycosylation" value="3 sites, No reported glycans"/>
</dbReference>
<dbReference type="PaxDb" id="8364-ENSXETP00000019730"/>
<dbReference type="GeneID" id="100127175"/>
<dbReference type="CTD" id="100127175"/>
<dbReference type="InParanoid" id="Q800B8"/>
<dbReference type="Proteomes" id="UP000008143">
    <property type="component" value="Unplaced"/>
</dbReference>
<dbReference type="GO" id="GO:0005576">
    <property type="term" value="C:extracellular region"/>
    <property type="evidence" value="ECO:0007669"/>
    <property type="project" value="UniProtKB-SubCell"/>
</dbReference>
<dbReference type="GO" id="GO:0008083">
    <property type="term" value="F:growth factor activity"/>
    <property type="evidence" value="ECO:0007669"/>
    <property type="project" value="UniProtKB-KW"/>
</dbReference>
<dbReference type="GO" id="GO:0007369">
    <property type="term" value="P:gastrulation"/>
    <property type="evidence" value="ECO:0007669"/>
    <property type="project" value="UniProtKB-KW"/>
</dbReference>
<dbReference type="FunFam" id="2.10.90.10:FF:000026">
    <property type="entry name" value="Nodal homolog 3-A"/>
    <property type="match status" value="1"/>
</dbReference>
<dbReference type="Gene3D" id="2.60.120.970">
    <property type="match status" value="1"/>
</dbReference>
<dbReference type="Gene3D" id="2.10.90.10">
    <property type="entry name" value="Cystine-knot cytokines"/>
    <property type="match status" value="1"/>
</dbReference>
<dbReference type="InterPro" id="IPR029034">
    <property type="entry name" value="Cystine-knot_cytokine"/>
</dbReference>
<dbReference type="InterPro" id="IPR001839">
    <property type="entry name" value="TGF-b_C"/>
</dbReference>
<dbReference type="InterPro" id="IPR001111">
    <property type="entry name" value="TGF-b_propeptide"/>
</dbReference>
<dbReference type="InterPro" id="IPR015615">
    <property type="entry name" value="TGF-beta-rel"/>
</dbReference>
<dbReference type="PANTHER" id="PTHR11848:SF295">
    <property type="entry name" value="NODAL HOMOLOG 3-C"/>
    <property type="match status" value="1"/>
</dbReference>
<dbReference type="PANTHER" id="PTHR11848">
    <property type="entry name" value="TGF-BETA FAMILY"/>
    <property type="match status" value="1"/>
</dbReference>
<dbReference type="Pfam" id="PF00019">
    <property type="entry name" value="TGF_beta"/>
    <property type="match status" value="1"/>
</dbReference>
<dbReference type="Pfam" id="PF00688">
    <property type="entry name" value="TGFb_propeptide"/>
    <property type="match status" value="1"/>
</dbReference>
<dbReference type="SMART" id="SM00204">
    <property type="entry name" value="TGFB"/>
    <property type="match status" value="1"/>
</dbReference>
<dbReference type="SUPFAM" id="SSF57501">
    <property type="entry name" value="Cystine-knot cytokines"/>
    <property type="match status" value="1"/>
</dbReference>
<dbReference type="PROSITE" id="PS51362">
    <property type="entry name" value="TGF_BETA_2"/>
    <property type="match status" value="1"/>
</dbReference>
<comment type="function">
    <text evidence="3 6">Exhibits mesoderm-dorsalizing activity and neural-inducing activity, but lacks mesoderm-inducing activity. Regulates the expression of specific mesodermal and neural genes. Induces convergent extension movements at the embryonic midline by activating the fgf signaling pathway to induce t/bra expression in the organizer region. Acts with wnt11 to induce Spemann organizer cells and induce axis formation (By similarity). The unprocessed protein antagonizes bmp-signaling.</text>
</comment>
<comment type="subunit">
    <text evidence="1 6">Monomer (By similarity). The propeptide region interacts with bmp4 in a non-covalent manner.</text>
</comment>
<comment type="subcellular location">
    <subcellularLocation>
        <location evidence="4">Secreted</location>
    </subcellularLocation>
</comment>
<comment type="tissue specificity">
    <text evidence="6">Expressed in the dorsal marginal region of late blastula, becoming restricted to the Spemann organizer at the early gastrula stage.</text>
</comment>
<comment type="developmental stage">
    <text evidence="6">First detected at the blastula stage (stage 8). Expression peaks through the mid-blastula (stage 8.5) to early gastrula (stage 10) and then decreases during gastrulation.</text>
</comment>
<comment type="domain">
    <text evidence="1">The propeptide region is both necessary and sufficient for bmp-inhibitory activity. The propeptide region and the N- and C-terminal thirds of the mature protein are necessary for neural induction activity. Although cleavage doesn't appear essential for activity, residues surrounding the cleavage site are necessary for activity (By similarity).</text>
</comment>
<comment type="similarity">
    <text evidence="5">Belongs to the TGF-beta family.</text>
</comment>
<evidence type="ECO:0000250" key="1"/>
<evidence type="ECO:0000250" key="2">
    <source>
        <dbReference type="UniProtKB" id="P43021"/>
    </source>
</evidence>
<evidence type="ECO:0000250" key="3">
    <source>
        <dbReference type="UniProtKB" id="Q91609"/>
    </source>
</evidence>
<evidence type="ECO:0000250" key="4">
    <source>
        <dbReference type="UniProtKB" id="Q91620"/>
    </source>
</evidence>
<evidence type="ECO:0000255" key="5"/>
<evidence type="ECO:0000269" key="6">
    <source>
    </source>
</evidence>
<evidence type="ECO:0000305" key="7"/>
<evidence type="ECO:0000312" key="8">
    <source>
        <dbReference type="EMBL" id="BAC75532.1"/>
    </source>
</evidence>
<proteinExistence type="evidence at protein level"/>
<keyword id="KW-0165">Cleavage on pair of basic residues</keyword>
<keyword id="KW-0217">Developmental protein</keyword>
<keyword id="KW-1015">Disulfide bond</keyword>
<keyword id="KW-0306">Gastrulation</keyword>
<keyword id="KW-0325">Glycoprotein</keyword>
<keyword id="KW-0339">Growth factor</keyword>
<keyword id="KW-1185">Reference proteome</keyword>
<keyword id="KW-0964">Secreted</keyword>
<keyword id="KW-0732">Signal</keyword>
<name>NOD3C_XENTR</name>
<organism>
    <name type="scientific">Xenopus tropicalis</name>
    <name type="common">Western clawed frog</name>
    <name type="synonym">Silurana tropicalis</name>
    <dbReference type="NCBI Taxonomy" id="8364"/>
    <lineage>
        <taxon>Eukaryota</taxon>
        <taxon>Metazoa</taxon>
        <taxon>Chordata</taxon>
        <taxon>Craniata</taxon>
        <taxon>Vertebrata</taxon>
        <taxon>Euteleostomi</taxon>
        <taxon>Amphibia</taxon>
        <taxon>Batrachia</taxon>
        <taxon>Anura</taxon>
        <taxon>Pipoidea</taxon>
        <taxon>Pipidae</taxon>
        <taxon>Xenopodinae</taxon>
        <taxon>Xenopus</taxon>
        <taxon>Silurana</taxon>
    </lineage>
</organism>
<reference evidence="7 8" key="1">
    <citation type="journal article" date="2004" name="Dev. Biol.">
        <title>Xenopus tropicalis nodal-related gene 3 regulates BMP signaling: an essential role for the pro-region.</title>
        <authorList>
            <person name="Haramoto Y."/>
            <person name="Tanegashima K."/>
            <person name="Onuma Y."/>
            <person name="Takahashi S."/>
            <person name="Sekizaki H."/>
            <person name="Asashima M."/>
        </authorList>
    </citation>
    <scope>NUCLEOTIDE SEQUENCE [MRNA]</scope>
    <scope>FUNCTION</scope>
    <scope>INTERACTION WITH BMP4</scope>
    <scope>TISSUE SPECIFICITY</scope>
    <scope>DEVELOPMENTAL STAGE</scope>
    <source>
        <tissue evidence="6">Gastrula</tissue>
    </source>
</reference>
<sequence length="401" mass="45788">MAFLSLFLCLVFSSPLMAMPPALQGRKAISPASILKGPSTDNGARDFHGRKFPHFMMQLYQNIISRRDKDLSNLEHPTLQESDTVQSFIAKSYTTKGNHWTLFFDMSSISTSNELKSAELRICLPSFGKSHSVTVEIYHTKDDKEKLFMGSFKTKISSALDADCKVFNLTMVLHNYLTKGKRLIKDEYIQAKGLLLRDLEKSATETGAERVDIVKQDKHHVSDFSAERIILVVFAKEKDHAKPDPPSLGKKLFPSKYGMADSANKVNGFRRLRRNKKEKTRMDVGTTPPKPVEEIKPKCRKVDMFVDFQKIGWGSWIVYPKAYNAYRCESACAVPLNETDDATNYSYIKSLLPLSDTDRRECPSCVPVKMRSMSMLYYENEDFVLRHHEEMIVEECGYKDI</sequence>
<gene>
    <name evidence="4" type="primary">nodal3-C</name>
    <name evidence="8" type="synonym">nr3-C</name>
</gene>
<accession>Q800B8</accession>